<sequence length="369" mass="40168">MRKRYDTIVIGGGIIGTSIAYHLAKAGKKTAVFESGEVGKKATSAAAGMLGAHAECDKPGTFFEFARASQKAYKRLTGELKDISGIDIRRHDGGILKLAFSESDREHLMQMGALDSVEWLEADEVYKLEPNAGKGILGANFIRDDVHVEPAAVCRAFARGARMLGADVFEYTPVLSIESEAGAVRVTSASGTAEAEHAVIASGVWSGALFKQIGLDKRFYPVKGECLSVWNDGISLTRTLYHDHCYIVPRHSGRLVVGATMKPGDWNEQPELGGIEELIRKAKSMLPGIESMKIDQCWAGLRPETGDGNPYIGRHPENDRILFAAGHFRNGILLAPATGEMMADMILGNPVKTEWIEAFKAERKEAVHR</sequence>
<name>GLYOX_BACLI</name>
<keyword id="KW-0274">FAD</keyword>
<keyword id="KW-0285">Flavoprotein</keyword>
<keyword id="KW-0560">Oxidoreductase</keyword>
<keyword id="KW-0784">Thiamine biosynthesis</keyword>
<evidence type="ECO:0000250" key="1">
    <source>
        <dbReference type="UniProtKB" id="O31616"/>
    </source>
</evidence>
<evidence type="ECO:0000269" key="2">
    <source>
    </source>
</evidence>
<evidence type="ECO:0000303" key="3">
    <source>
    </source>
</evidence>
<evidence type="ECO:0000305" key="4"/>
<evidence type="ECO:0000305" key="5">
    <source>
    </source>
</evidence>
<reference key="1">
    <citation type="journal article" date="2016" name="Enzyme Microb. Technol.">
        <title>Characterization and directed evolution of BliGO, a novel glycine oxidase from Bacillus licheniformis.</title>
        <authorList>
            <person name="Zhang K."/>
            <person name="Guo Y."/>
            <person name="Yao P."/>
            <person name="Lin Y."/>
            <person name="Kumar A."/>
            <person name="Liu Z."/>
            <person name="Wu G."/>
            <person name="Zhang L."/>
        </authorList>
    </citation>
    <scope>NUCLEOTIDE SEQUENCE [GENOMIC DNA]</scope>
    <scope>FUNCTION</scope>
    <scope>CATALYTIC ACTIVITY</scope>
    <scope>BIOPHYSICOCHEMICAL PROPERTIES</scope>
    <scope>COFACTOR</scope>
    <scope>3D-STRUCTURE MODELING</scope>
    <scope>PROTEIN ENGINEERING</scope>
    <scope>BIOTECHNOLOGY</scope>
    <scope>MUTAGENESIS OF GLY-51</scope>
    <source>
        <strain>J33-8</strain>
    </source>
</reference>
<accession>S5FMM4</accession>
<proteinExistence type="evidence at protein level"/>
<comment type="function">
    <text evidence="1 2">Catalyzes the FAD-dependent oxidative deamination of glycine, leading to glyoxylate, ammonia and hydrogen peroxide (PubMed:26920475). Is also able to act on various amines and D-amino acids to yield the corresponding alpha-keto acids, ammonia/amine, and hydrogen peroxide (By similarity). Can also oxidize the herbicide glyphosate (N-phosphonomethylglycine), and thus may be involved in the degradation pathway that allows B.licheniformis J33-8 to grow with glyphosate as the sole source of carbon (PubMed:26920475). Is essential for thiamine biosynthesis since the oxidation of glycine catalyzed by ThiO generates the glycine imine intermediate (dehydroglycine) required for the biosynthesis of the thiazole ring of thiamine pyrophosphate (By similarity).</text>
</comment>
<comment type="catalytic activity">
    <reaction evidence="2">
        <text>glycine + O2 + H2O = glyoxylate + H2O2 + NH4(+)</text>
        <dbReference type="Rhea" id="RHEA:11532"/>
        <dbReference type="ChEBI" id="CHEBI:15377"/>
        <dbReference type="ChEBI" id="CHEBI:15379"/>
        <dbReference type="ChEBI" id="CHEBI:16240"/>
        <dbReference type="ChEBI" id="CHEBI:28938"/>
        <dbReference type="ChEBI" id="CHEBI:36655"/>
        <dbReference type="ChEBI" id="CHEBI:57305"/>
        <dbReference type="EC" id="1.4.3.19"/>
    </reaction>
</comment>
<comment type="catalytic activity">
    <reaction evidence="2">
        <text>glyphosate + O2 + H2O = aminomethylphosphonate + glyoxylate + H2O2 + H(+)</text>
        <dbReference type="Rhea" id="RHEA:52740"/>
        <dbReference type="ChEBI" id="CHEBI:15377"/>
        <dbReference type="ChEBI" id="CHEBI:15378"/>
        <dbReference type="ChEBI" id="CHEBI:15379"/>
        <dbReference type="ChEBI" id="CHEBI:16240"/>
        <dbReference type="ChEBI" id="CHEBI:36655"/>
        <dbReference type="ChEBI" id="CHEBI:133673"/>
        <dbReference type="ChEBI" id="CHEBI:133674"/>
    </reaction>
</comment>
<comment type="catalytic activity">
    <reaction evidence="1">
        <text>N-ethylglycine + O2 + H2O = ethylamine + glyoxylate + H2O2</text>
        <dbReference type="Rhea" id="RHEA:12472"/>
        <dbReference type="ChEBI" id="CHEBI:15377"/>
        <dbReference type="ChEBI" id="CHEBI:15379"/>
        <dbReference type="ChEBI" id="CHEBI:16240"/>
        <dbReference type="ChEBI" id="CHEBI:36655"/>
        <dbReference type="ChEBI" id="CHEBI:57440"/>
        <dbReference type="ChEBI" id="CHEBI:566789"/>
        <dbReference type="EC" id="1.4.3.19"/>
    </reaction>
</comment>
<comment type="catalytic activity">
    <reaction evidence="1">
        <text>sarcosine + O2 + H2O = methylamine + glyoxylate + H2O2</text>
        <dbReference type="Rhea" id="RHEA:15165"/>
        <dbReference type="ChEBI" id="CHEBI:15377"/>
        <dbReference type="ChEBI" id="CHEBI:15379"/>
        <dbReference type="ChEBI" id="CHEBI:16240"/>
        <dbReference type="ChEBI" id="CHEBI:36655"/>
        <dbReference type="ChEBI" id="CHEBI:57433"/>
        <dbReference type="ChEBI" id="CHEBI:59338"/>
        <dbReference type="EC" id="1.4.3.19"/>
    </reaction>
</comment>
<comment type="catalytic activity">
    <reaction evidence="1">
        <text>D-alanine + O2 + H2O = pyruvate + H2O2 + NH4(+)</text>
        <dbReference type="Rhea" id="RHEA:22688"/>
        <dbReference type="ChEBI" id="CHEBI:15361"/>
        <dbReference type="ChEBI" id="CHEBI:15377"/>
        <dbReference type="ChEBI" id="CHEBI:15379"/>
        <dbReference type="ChEBI" id="CHEBI:16240"/>
        <dbReference type="ChEBI" id="CHEBI:28938"/>
        <dbReference type="ChEBI" id="CHEBI:57416"/>
        <dbReference type="EC" id="1.4.3.19"/>
    </reaction>
</comment>
<comment type="cofactor">
    <cofactor evidence="1 5">
        <name>FAD</name>
        <dbReference type="ChEBI" id="CHEBI:57692"/>
    </cofactor>
    <text evidence="1">Binds 1 FAD per subunit.</text>
</comment>
<comment type="biophysicochemical properties">
    <kinetics>
        <KM evidence="2">0.9 mM for glycine</KM>
        <KM evidence="2">11.22 mM for glyphosate</KM>
        <text evidence="2">kcat is 0.31 sec(-1) with glycine as substrate. kcat is 0.08 sec(-1) with glyphosate as substrate.</text>
    </kinetics>
    <phDependence>
        <text evidence="2">Optimum pH is 8.5. Displays over 60% of maximum activity at pH 8.0-10.</text>
    </phDependence>
    <temperatureDependence>
        <text evidence="2">Optimum temperature is 40 degrees Celsius. Retains 60% of the maximum activity at 0 degrees Celsius, suggesting it is a cold-adapted enzyme.</text>
    </temperatureDependence>
</comment>
<comment type="pathway">
    <text evidence="1">Cofactor biosynthesis; thiamine diphosphate biosynthesis.</text>
</comment>
<comment type="subunit">
    <text evidence="1">Homotetramer.</text>
</comment>
<comment type="biotechnology">
    <text evidence="5">This glyphosate-degrading enzyme could be of potential use in agricultural biotechnology for the development of new-generation herbicide-resistant plants. The SCF-4 mutant obtained by engineering shows significant improved catalytic efficiency towards glyphosate, and a better affinity to glyphosate than that reported for glyphosate oxidoreductase GOX in a Monsanto's patent.</text>
</comment>
<comment type="similarity">
    <text evidence="4">Belongs to the DAO family. ThiO subfamily.</text>
</comment>
<gene>
    <name evidence="1" type="primary">thiO</name>
</gene>
<feature type="chain" id="PRO_0000440179" description="Glycine oxidase">
    <location>
        <begin position="1"/>
        <end position="369"/>
    </location>
</feature>
<feature type="binding site" evidence="1">
    <location>
        <begin position="14"/>
        <end position="15"/>
    </location>
    <ligand>
        <name>FAD</name>
        <dbReference type="ChEBI" id="CHEBI:57692"/>
    </ligand>
</feature>
<feature type="binding site" evidence="1">
    <location>
        <begin position="34"/>
        <end position="35"/>
    </location>
    <ligand>
        <name>FAD</name>
        <dbReference type="ChEBI" id="CHEBI:57692"/>
    </ligand>
</feature>
<feature type="binding site" evidence="1">
    <location>
        <begin position="42"/>
        <end position="43"/>
    </location>
    <ligand>
        <name>FAD</name>
        <dbReference type="ChEBI" id="CHEBI:57692"/>
    </ligand>
</feature>
<feature type="binding site" evidence="1">
    <location>
        <begin position="47"/>
        <end position="49"/>
    </location>
    <ligand>
        <name>FAD</name>
        <dbReference type="ChEBI" id="CHEBI:57692"/>
    </ligand>
</feature>
<feature type="binding site" evidence="1">
    <location>
        <position position="174"/>
    </location>
    <ligand>
        <name>FAD</name>
        <dbReference type="ChEBI" id="CHEBI:57692"/>
    </ligand>
</feature>
<feature type="binding site" evidence="1">
    <location>
        <position position="302"/>
    </location>
    <ligand>
        <name>substrate</name>
    </ligand>
</feature>
<feature type="binding site" evidence="1">
    <location>
        <begin position="327"/>
        <end position="333"/>
    </location>
    <ligand>
        <name>FAD</name>
        <dbReference type="ChEBI" id="CHEBI:57692"/>
    </ligand>
</feature>
<feature type="binding site" evidence="1">
    <location>
        <position position="329"/>
    </location>
    <ligand>
        <name>substrate</name>
    </ligand>
</feature>
<feature type="mutagenesis site" description="Shows 4.3- and 107-fold increase of affinity to glyphosate and glycine, respectively. Shows 7.1- and 8-fold increase of affinity and catalytic efficiency to glyphosate, respectively, while the substrate affinity to glycine decreases 235-fold and catalytic efficiency decreases 113-fold; when associated with R-54, R-81, C-202, V-332 and V-342." evidence="2">
    <original>G</original>
    <variation>S</variation>
    <location>
        <position position="51"/>
    </location>
</feature>
<feature type="mutagenesis site" description="Shows 7.1- and 8-fold increase of affinity and catalytic efficiency to glyphosate, respectively, while the substrate affinity to glycine decreases 235-fold and catalytic efficiency decreases 113-fold; when associated with S-51, R-81, C-202, V-332 and V-342." evidence="2">
    <original>A</original>
    <variation>R</variation>
    <location>
        <position position="54"/>
    </location>
</feature>
<feature type="mutagenesis site" description="Shows 7.1- and 8-fold increase of affinity and catalytic efficiency to glyphosate, respectively, while the substrate affinity to glycine decreases 235-fold and catalytic efficiency decreases 113-fold; when associated with S-51, R-54, C-202, V-332 and V-342." evidence="2">
    <original>K</original>
    <variation>R</variation>
    <location>
        <position position="81"/>
    </location>
</feature>
<feature type="mutagenesis site" description="Shows 7.1- and 8-fold increase of affinity and catalytic efficiency to glyphosate, respectively, while the substrate affinity to glycine decreases 235-fold and catalytic efficiency decreases 113-fold; when associated with S-51, R-54, R-81, V-332 and V-342." evidence="2">
    <original>S</original>
    <variation>C</variation>
    <location>
        <position position="202"/>
    </location>
</feature>
<feature type="mutagenesis site" description="Shows 7.1- and 8-fold increase of affinity and catalytic efficiency to glyphosate, respectively, while the substrate affinity to glycine decreases 235-fold and catalytic efficiency decreases 113-fold; when associated with S-51, R-54, R-81, C-202 and V-342." evidence="2">
    <original>I</original>
    <variation>V</variation>
    <location>
        <position position="332"/>
    </location>
</feature>
<feature type="mutagenesis site" description="Shows 7.1- and 8-fold increase of affinity and catalytic efficiency to glyphosate, respectively, while the substrate affinity to glycine decreases 235-fold and catalytic efficiency decreases 113-fold; when associated with S-51, R-54, R-81, C-202 and V-332." evidence="2">
    <original>M</original>
    <variation>V</variation>
    <location>
        <position position="342"/>
    </location>
</feature>
<protein>
    <recommendedName>
        <fullName evidence="3">Glycine oxidase</fullName>
        <shortName evidence="3">GO</shortName>
        <ecNumber evidence="2">1.4.3.19</ecNumber>
    </recommendedName>
    <alternativeName>
        <fullName evidence="3">BliGO</fullName>
    </alternativeName>
</protein>
<dbReference type="EC" id="1.4.3.19" evidence="2"/>
<dbReference type="EMBL" id="KC831746">
    <property type="protein sequence ID" value="AGQ46835.1"/>
    <property type="molecule type" value="Genomic_DNA"/>
</dbReference>
<dbReference type="RefSeq" id="WP_003180677.1">
    <property type="nucleotide sequence ID" value="NZ_BOQU01000001.1"/>
</dbReference>
<dbReference type="SMR" id="S5FMM4"/>
<dbReference type="GeneID" id="92862155"/>
<dbReference type="PATRIC" id="fig|1402.62.peg.4127"/>
<dbReference type="OMA" id="GCGTLWL"/>
<dbReference type="BRENDA" id="1.4.3.19">
    <property type="organism ID" value="669"/>
</dbReference>
<dbReference type="UniPathway" id="UPA00060"/>
<dbReference type="GO" id="GO:0005737">
    <property type="term" value="C:cytoplasm"/>
    <property type="evidence" value="ECO:0007669"/>
    <property type="project" value="TreeGrafter"/>
</dbReference>
<dbReference type="GO" id="GO:0050660">
    <property type="term" value="F:flavin adenine dinucleotide binding"/>
    <property type="evidence" value="ECO:0007669"/>
    <property type="project" value="InterPro"/>
</dbReference>
<dbReference type="GO" id="GO:0043799">
    <property type="term" value="F:glycine oxidase activity"/>
    <property type="evidence" value="ECO:0007669"/>
    <property type="project" value="UniProtKB-EC"/>
</dbReference>
<dbReference type="GO" id="GO:0009228">
    <property type="term" value="P:thiamine biosynthetic process"/>
    <property type="evidence" value="ECO:0007669"/>
    <property type="project" value="UniProtKB-KW"/>
</dbReference>
<dbReference type="GO" id="GO:0009229">
    <property type="term" value="P:thiamine diphosphate biosynthetic process"/>
    <property type="evidence" value="ECO:0007669"/>
    <property type="project" value="UniProtKB-UniPathway"/>
</dbReference>
<dbReference type="Gene3D" id="3.30.9.10">
    <property type="entry name" value="D-Amino Acid Oxidase, subunit A, domain 2"/>
    <property type="match status" value="1"/>
</dbReference>
<dbReference type="Gene3D" id="3.50.50.60">
    <property type="entry name" value="FAD/NAD(P)-binding domain"/>
    <property type="match status" value="1"/>
</dbReference>
<dbReference type="InterPro" id="IPR006076">
    <property type="entry name" value="FAD-dep_OxRdtase"/>
</dbReference>
<dbReference type="InterPro" id="IPR036188">
    <property type="entry name" value="FAD/NAD-bd_sf"/>
</dbReference>
<dbReference type="InterPro" id="IPR012727">
    <property type="entry name" value="Gly_oxidase_ThiO"/>
</dbReference>
<dbReference type="NCBIfam" id="TIGR02352">
    <property type="entry name" value="thiamin_ThiO"/>
    <property type="match status" value="1"/>
</dbReference>
<dbReference type="PANTHER" id="PTHR13847:SF289">
    <property type="entry name" value="GLYCINE OXIDASE"/>
    <property type="match status" value="1"/>
</dbReference>
<dbReference type="PANTHER" id="PTHR13847">
    <property type="entry name" value="SARCOSINE DEHYDROGENASE-RELATED"/>
    <property type="match status" value="1"/>
</dbReference>
<dbReference type="Pfam" id="PF01266">
    <property type="entry name" value="DAO"/>
    <property type="match status" value="1"/>
</dbReference>
<dbReference type="SUPFAM" id="SSF54373">
    <property type="entry name" value="FAD-linked reductases, C-terminal domain"/>
    <property type="match status" value="1"/>
</dbReference>
<dbReference type="SUPFAM" id="SSF51905">
    <property type="entry name" value="FAD/NAD(P)-binding domain"/>
    <property type="match status" value="1"/>
</dbReference>
<organism>
    <name type="scientific">Bacillus licheniformis</name>
    <dbReference type="NCBI Taxonomy" id="1402"/>
    <lineage>
        <taxon>Bacteria</taxon>
        <taxon>Bacillati</taxon>
        <taxon>Bacillota</taxon>
        <taxon>Bacilli</taxon>
        <taxon>Bacillales</taxon>
        <taxon>Bacillaceae</taxon>
        <taxon>Bacillus</taxon>
    </lineage>
</organism>